<feature type="chain" id="PRO_0000311365" description="Poly(A)-specific ribonuclease PNLDC1">
    <location>
        <begin position="1"/>
        <end position="520"/>
    </location>
</feature>
<feature type="transmembrane region" description="Helical" evidence="3">
    <location>
        <begin position="495"/>
        <end position="515"/>
    </location>
</feature>
<feature type="binding site" evidence="2">
    <location>
        <position position="17"/>
    </location>
    <ligand>
        <name>Mg(2+)</name>
        <dbReference type="ChEBI" id="CHEBI:18420"/>
        <note>catalytic</note>
    </ligand>
</feature>
<feature type="binding site" evidence="2">
    <location>
        <position position="19"/>
    </location>
    <ligand>
        <name>Mg(2+)</name>
        <dbReference type="ChEBI" id="CHEBI:18420"/>
        <note>catalytic</note>
    </ligand>
</feature>
<feature type="binding site" evidence="2">
    <location>
        <position position="260"/>
    </location>
    <ligand>
        <name>Mg(2+)</name>
        <dbReference type="ChEBI" id="CHEBI:18420"/>
        <note>catalytic</note>
    </ligand>
</feature>
<feature type="binding site" evidence="2">
    <location>
        <position position="354"/>
    </location>
    <ligand>
        <name>Mg(2+)</name>
        <dbReference type="ChEBI" id="CHEBI:18420"/>
        <note>catalytic</note>
    </ligand>
</feature>
<feature type="site" description="Interaction with poly(A)" evidence="2">
    <location>
        <position position="294"/>
    </location>
</feature>
<feature type="splice variant" id="VSP_029552" description="In isoform 2." evidence="6">
    <original>MFCTRGLLFFAFLA</original>
    <variation>MDVGADEFEESLPLLQELVQEADFV</variation>
    <location>
        <begin position="1"/>
        <end position="14"/>
    </location>
</feature>
<feature type="sequence variant" id="VAR_085807" description="In SPGF57; dbSNP:rs2115028353." evidence="5">
    <original>P</original>
    <variation>S</variation>
    <location>
        <position position="84"/>
    </location>
</feature>
<feature type="sequence variant" id="VAR_085808" description="In SPGF57; uncertain significance; dbSNP:rs141903829." evidence="5">
    <original>M</original>
    <variation>T</variation>
    <location>
        <position position="259"/>
    </location>
</feature>
<feature type="sequence variant" id="VAR_085809" description="In SPGF57." evidence="5">
    <location>
        <begin position="452"/>
        <end position="520"/>
    </location>
</feature>
<reference key="1">
    <citation type="journal article" date="2004" name="Nat. Genet.">
        <title>Complete sequencing and characterization of 21,243 full-length human cDNAs.</title>
        <authorList>
            <person name="Ota T."/>
            <person name="Suzuki Y."/>
            <person name="Nishikawa T."/>
            <person name="Otsuki T."/>
            <person name="Sugiyama T."/>
            <person name="Irie R."/>
            <person name="Wakamatsu A."/>
            <person name="Hayashi K."/>
            <person name="Sato H."/>
            <person name="Nagai K."/>
            <person name="Kimura K."/>
            <person name="Makita H."/>
            <person name="Sekine M."/>
            <person name="Obayashi M."/>
            <person name="Nishi T."/>
            <person name="Shibahara T."/>
            <person name="Tanaka T."/>
            <person name="Ishii S."/>
            <person name="Yamamoto J."/>
            <person name="Saito K."/>
            <person name="Kawai Y."/>
            <person name="Isono Y."/>
            <person name="Nakamura Y."/>
            <person name="Nagahari K."/>
            <person name="Murakami K."/>
            <person name="Yasuda T."/>
            <person name="Iwayanagi T."/>
            <person name="Wagatsuma M."/>
            <person name="Shiratori A."/>
            <person name="Sudo H."/>
            <person name="Hosoiri T."/>
            <person name="Kaku Y."/>
            <person name="Kodaira H."/>
            <person name="Kondo H."/>
            <person name="Sugawara M."/>
            <person name="Takahashi M."/>
            <person name="Kanda K."/>
            <person name="Yokoi T."/>
            <person name="Furuya T."/>
            <person name="Kikkawa E."/>
            <person name="Omura Y."/>
            <person name="Abe K."/>
            <person name="Kamihara K."/>
            <person name="Katsuta N."/>
            <person name="Sato K."/>
            <person name="Tanikawa M."/>
            <person name="Yamazaki M."/>
            <person name="Ninomiya K."/>
            <person name="Ishibashi T."/>
            <person name="Yamashita H."/>
            <person name="Murakawa K."/>
            <person name="Fujimori K."/>
            <person name="Tanai H."/>
            <person name="Kimata M."/>
            <person name="Watanabe M."/>
            <person name="Hiraoka S."/>
            <person name="Chiba Y."/>
            <person name="Ishida S."/>
            <person name="Ono Y."/>
            <person name="Takiguchi S."/>
            <person name="Watanabe S."/>
            <person name="Yosida M."/>
            <person name="Hotuta T."/>
            <person name="Kusano J."/>
            <person name="Kanehori K."/>
            <person name="Takahashi-Fujii A."/>
            <person name="Hara H."/>
            <person name="Tanase T.-O."/>
            <person name="Nomura Y."/>
            <person name="Togiya S."/>
            <person name="Komai F."/>
            <person name="Hara R."/>
            <person name="Takeuchi K."/>
            <person name="Arita M."/>
            <person name="Imose N."/>
            <person name="Musashino K."/>
            <person name="Yuuki H."/>
            <person name="Oshima A."/>
            <person name="Sasaki N."/>
            <person name="Aotsuka S."/>
            <person name="Yoshikawa Y."/>
            <person name="Matsunawa H."/>
            <person name="Ichihara T."/>
            <person name="Shiohata N."/>
            <person name="Sano S."/>
            <person name="Moriya S."/>
            <person name="Momiyama H."/>
            <person name="Satoh N."/>
            <person name="Takami S."/>
            <person name="Terashima Y."/>
            <person name="Suzuki O."/>
            <person name="Nakagawa S."/>
            <person name="Senoh A."/>
            <person name="Mizoguchi H."/>
            <person name="Goto Y."/>
            <person name="Shimizu F."/>
            <person name="Wakebe H."/>
            <person name="Hishigaki H."/>
            <person name="Watanabe T."/>
            <person name="Sugiyama A."/>
            <person name="Takemoto M."/>
            <person name="Kawakami B."/>
            <person name="Yamazaki M."/>
            <person name="Watanabe K."/>
            <person name="Kumagai A."/>
            <person name="Itakura S."/>
            <person name="Fukuzumi Y."/>
            <person name="Fujimori Y."/>
            <person name="Komiyama M."/>
            <person name="Tashiro H."/>
            <person name="Tanigami A."/>
            <person name="Fujiwara T."/>
            <person name="Ono T."/>
            <person name="Yamada K."/>
            <person name="Fujii Y."/>
            <person name="Ozaki K."/>
            <person name="Hirao M."/>
            <person name="Ohmori Y."/>
            <person name="Kawabata A."/>
            <person name="Hikiji T."/>
            <person name="Kobatake N."/>
            <person name="Inagaki H."/>
            <person name="Ikema Y."/>
            <person name="Okamoto S."/>
            <person name="Okitani R."/>
            <person name="Kawakami T."/>
            <person name="Noguchi S."/>
            <person name="Itoh T."/>
            <person name="Shigeta K."/>
            <person name="Senba T."/>
            <person name="Matsumura K."/>
            <person name="Nakajima Y."/>
            <person name="Mizuno T."/>
            <person name="Morinaga M."/>
            <person name="Sasaki M."/>
            <person name="Togashi T."/>
            <person name="Oyama M."/>
            <person name="Hata H."/>
            <person name="Watanabe M."/>
            <person name="Komatsu T."/>
            <person name="Mizushima-Sugano J."/>
            <person name="Satoh T."/>
            <person name="Shirai Y."/>
            <person name="Takahashi Y."/>
            <person name="Nakagawa K."/>
            <person name="Okumura K."/>
            <person name="Nagase T."/>
            <person name="Nomura N."/>
            <person name="Kikuchi H."/>
            <person name="Masuho Y."/>
            <person name="Yamashita R."/>
            <person name="Nakai K."/>
            <person name="Yada T."/>
            <person name="Nakamura Y."/>
            <person name="Ohara O."/>
            <person name="Isogai T."/>
            <person name="Sugano S."/>
        </authorList>
    </citation>
    <scope>NUCLEOTIDE SEQUENCE [LARGE SCALE MRNA] (ISOFORMS 1 AND 2)</scope>
    <source>
        <tissue>Testis</tissue>
    </source>
</reference>
<reference key="2">
    <citation type="journal article" date="2003" name="Nature">
        <title>The DNA sequence and analysis of human chromosome 6.</title>
        <authorList>
            <person name="Mungall A.J."/>
            <person name="Palmer S.A."/>
            <person name="Sims S.K."/>
            <person name="Edwards C.A."/>
            <person name="Ashurst J.L."/>
            <person name="Wilming L."/>
            <person name="Jones M.C."/>
            <person name="Horton R."/>
            <person name="Hunt S.E."/>
            <person name="Scott C.E."/>
            <person name="Gilbert J.G.R."/>
            <person name="Clamp M.E."/>
            <person name="Bethel G."/>
            <person name="Milne S."/>
            <person name="Ainscough R."/>
            <person name="Almeida J.P."/>
            <person name="Ambrose K.D."/>
            <person name="Andrews T.D."/>
            <person name="Ashwell R.I.S."/>
            <person name="Babbage A.K."/>
            <person name="Bagguley C.L."/>
            <person name="Bailey J."/>
            <person name="Banerjee R."/>
            <person name="Barker D.J."/>
            <person name="Barlow K.F."/>
            <person name="Bates K."/>
            <person name="Beare D.M."/>
            <person name="Beasley H."/>
            <person name="Beasley O."/>
            <person name="Bird C.P."/>
            <person name="Blakey S.E."/>
            <person name="Bray-Allen S."/>
            <person name="Brook J."/>
            <person name="Brown A.J."/>
            <person name="Brown J.Y."/>
            <person name="Burford D.C."/>
            <person name="Burrill W."/>
            <person name="Burton J."/>
            <person name="Carder C."/>
            <person name="Carter N.P."/>
            <person name="Chapman J.C."/>
            <person name="Clark S.Y."/>
            <person name="Clark G."/>
            <person name="Clee C.M."/>
            <person name="Clegg S."/>
            <person name="Cobley V."/>
            <person name="Collier R.E."/>
            <person name="Collins J.E."/>
            <person name="Colman L.K."/>
            <person name="Corby N.R."/>
            <person name="Coville G.J."/>
            <person name="Culley K.M."/>
            <person name="Dhami P."/>
            <person name="Davies J."/>
            <person name="Dunn M."/>
            <person name="Earthrowl M.E."/>
            <person name="Ellington A.E."/>
            <person name="Evans K.A."/>
            <person name="Faulkner L."/>
            <person name="Francis M.D."/>
            <person name="Frankish A."/>
            <person name="Frankland J."/>
            <person name="French L."/>
            <person name="Garner P."/>
            <person name="Garnett J."/>
            <person name="Ghori M.J."/>
            <person name="Gilby L.M."/>
            <person name="Gillson C.J."/>
            <person name="Glithero R.J."/>
            <person name="Grafham D.V."/>
            <person name="Grant M."/>
            <person name="Gribble S."/>
            <person name="Griffiths C."/>
            <person name="Griffiths M.N.D."/>
            <person name="Hall R."/>
            <person name="Halls K.S."/>
            <person name="Hammond S."/>
            <person name="Harley J.L."/>
            <person name="Hart E.A."/>
            <person name="Heath P.D."/>
            <person name="Heathcott R."/>
            <person name="Holmes S.J."/>
            <person name="Howden P.J."/>
            <person name="Howe K.L."/>
            <person name="Howell G.R."/>
            <person name="Huckle E."/>
            <person name="Humphray S.J."/>
            <person name="Humphries M.D."/>
            <person name="Hunt A.R."/>
            <person name="Johnson C.M."/>
            <person name="Joy A.A."/>
            <person name="Kay M."/>
            <person name="Keenan S.J."/>
            <person name="Kimberley A.M."/>
            <person name="King A."/>
            <person name="Laird G.K."/>
            <person name="Langford C."/>
            <person name="Lawlor S."/>
            <person name="Leongamornlert D.A."/>
            <person name="Leversha M."/>
            <person name="Lloyd C.R."/>
            <person name="Lloyd D.M."/>
            <person name="Loveland J.E."/>
            <person name="Lovell J."/>
            <person name="Martin S."/>
            <person name="Mashreghi-Mohammadi M."/>
            <person name="Maslen G.L."/>
            <person name="Matthews L."/>
            <person name="McCann O.T."/>
            <person name="McLaren S.J."/>
            <person name="McLay K."/>
            <person name="McMurray A."/>
            <person name="Moore M.J.F."/>
            <person name="Mullikin J.C."/>
            <person name="Niblett D."/>
            <person name="Nickerson T."/>
            <person name="Novik K.L."/>
            <person name="Oliver K."/>
            <person name="Overton-Larty E.K."/>
            <person name="Parker A."/>
            <person name="Patel R."/>
            <person name="Pearce A.V."/>
            <person name="Peck A.I."/>
            <person name="Phillimore B.J.C.T."/>
            <person name="Phillips S."/>
            <person name="Plumb R.W."/>
            <person name="Porter K.M."/>
            <person name="Ramsey Y."/>
            <person name="Ranby S.A."/>
            <person name="Rice C.M."/>
            <person name="Ross M.T."/>
            <person name="Searle S.M."/>
            <person name="Sehra H.K."/>
            <person name="Sheridan E."/>
            <person name="Skuce C.D."/>
            <person name="Smith S."/>
            <person name="Smith M."/>
            <person name="Spraggon L."/>
            <person name="Squares S.L."/>
            <person name="Steward C.A."/>
            <person name="Sycamore N."/>
            <person name="Tamlyn-Hall G."/>
            <person name="Tester J."/>
            <person name="Theaker A.J."/>
            <person name="Thomas D.W."/>
            <person name="Thorpe A."/>
            <person name="Tracey A."/>
            <person name="Tromans A."/>
            <person name="Tubby B."/>
            <person name="Wall M."/>
            <person name="Wallis J.M."/>
            <person name="West A.P."/>
            <person name="White S.S."/>
            <person name="Whitehead S.L."/>
            <person name="Whittaker H."/>
            <person name="Wild A."/>
            <person name="Willey D.J."/>
            <person name="Wilmer T.E."/>
            <person name="Wood J.M."/>
            <person name="Wray P.W."/>
            <person name="Wyatt J.C."/>
            <person name="Young L."/>
            <person name="Younger R.M."/>
            <person name="Bentley D.R."/>
            <person name="Coulson A."/>
            <person name="Durbin R.M."/>
            <person name="Hubbard T."/>
            <person name="Sulston J.E."/>
            <person name="Dunham I."/>
            <person name="Rogers J."/>
            <person name="Beck S."/>
        </authorList>
    </citation>
    <scope>NUCLEOTIDE SEQUENCE [LARGE SCALE GENOMIC DNA]</scope>
</reference>
<reference key="3">
    <citation type="submission" date="2005-09" db="EMBL/GenBank/DDBJ databases">
        <authorList>
            <person name="Mural R.J."/>
            <person name="Istrail S."/>
            <person name="Sutton G.G."/>
            <person name="Florea L."/>
            <person name="Halpern A.L."/>
            <person name="Mobarry C.M."/>
            <person name="Lippert R."/>
            <person name="Walenz B."/>
            <person name="Shatkay H."/>
            <person name="Dew I."/>
            <person name="Miller J.R."/>
            <person name="Flanigan M.J."/>
            <person name="Edwards N.J."/>
            <person name="Bolanos R."/>
            <person name="Fasulo D."/>
            <person name="Halldorsson B.V."/>
            <person name="Hannenhalli S."/>
            <person name="Turner R."/>
            <person name="Yooseph S."/>
            <person name="Lu F."/>
            <person name="Nusskern D.R."/>
            <person name="Shue B.C."/>
            <person name="Zheng X.H."/>
            <person name="Zhong F."/>
            <person name="Delcher A.L."/>
            <person name="Huson D.H."/>
            <person name="Kravitz S.A."/>
            <person name="Mouchard L."/>
            <person name="Reinert K."/>
            <person name="Remington K.A."/>
            <person name="Clark A.G."/>
            <person name="Waterman M.S."/>
            <person name="Eichler E.E."/>
            <person name="Adams M.D."/>
            <person name="Hunkapiller M.W."/>
            <person name="Myers E.W."/>
            <person name="Venter J.C."/>
        </authorList>
    </citation>
    <scope>NUCLEOTIDE SEQUENCE [LARGE SCALE GENOMIC DNA]</scope>
</reference>
<reference key="4">
    <citation type="journal article" date="2004" name="Genome Res.">
        <title>The status, quality, and expansion of the NIH full-length cDNA project: the Mammalian Gene Collection (MGC).</title>
        <authorList>
            <consortium name="The MGC Project Team"/>
        </authorList>
    </citation>
    <scope>NUCLEOTIDE SEQUENCE [LARGE SCALE MRNA] (ISOFORM 1)</scope>
    <source>
        <tissue>Brain</tissue>
    </source>
</reference>
<reference key="5">
    <citation type="journal article" date="2016" name="Nucleic Acids Res.">
        <title>Mammalian PNLDC1 is a novel poly(A) specific exonuclease with discrete expression during early development.</title>
        <authorList>
            <person name="Anastasakis D."/>
            <person name="Skeparnias I."/>
            <person name="Shaukat A.N."/>
            <person name="Grafanaki K."/>
            <person name="Kanellou A."/>
            <person name="Taraviras S."/>
            <person name="Papachristou D.J."/>
            <person name="Papakyriakou A."/>
            <person name="Stathopoulos C."/>
        </authorList>
    </citation>
    <scope>FUNCTION</scope>
    <scope>CATALYTIC ACTIVITY</scope>
    <scope>COFACTOR</scope>
    <scope>SUBCELLULAR LOCATION</scope>
</reference>
<reference key="6">
    <citation type="journal article" date="2021" name="N. Engl. J. Med.">
        <title>Variant PNLDC1, defective piRNA processing, and azoospermia.</title>
        <authorList>
            <person name="Nagirnaja L."/>
            <person name="Moerup N."/>
            <person name="Nielsen J.E."/>
            <person name="Stakaitis R."/>
            <person name="Golubickaite I."/>
            <person name="Oud M.S."/>
            <person name="Winge S.B."/>
            <person name="Carvalho F."/>
            <person name="Aston K.I."/>
            <person name="Khani F."/>
            <person name="van der Heijden G.W."/>
            <person name="Marques C.J."/>
            <person name="Skakkebaek N.E."/>
            <person name="Rajpert-De Meyts E."/>
            <person name="Schlegel P.N."/>
            <person name="Joergensen N."/>
            <person name="Veltman J.A."/>
            <person name="Lopes A.M."/>
            <person name="Conrad D.F."/>
            <person name="Almstrup K."/>
        </authorList>
    </citation>
    <scope>FUNCTION</scope>
    <scope>INVOLVEMENT IN SPGF57</scope>
    <scope>VARIANTS SPGF57 SER-84; THR-259 AND 452-ARG--THR-520 DEL</scope>
</reference>
<keyword id="KW-0025">Alternative splicing</keyword>
<keyword id="KW-0225">Disease variant</keyword>
<keyword id="KW-0256">Endoplasmic reticulum</keyword>
<keyword id="KW-0269">Exonuclease</keyword>
<keyword id="KW-0378">Hydrolase</keyword>
<keyword id="KW-0460">Magnesium</keyword>
<keyword id="KW-0472">Membrane</keyword>
<keyword id="KW-0479">Metal-binding</keyword>
<keyword id="KW-0866">Nonsense-mediated mRNA decay</keyword>
<keyword id="KW-0540">Nuclease</keyword>
<keyword id="KW-1267">Proteomics identification</keyword>
<keyword id="KW-1185">Reference proteome</keyword>
<keyword id="KW-0694">RNA-binding</keyword>
<keyword id="KW-0812">Transmembrane</keyword>
<keyword id="KW-1133">Transmembrane helix</keyword>
<evidence type="ECO:0000250" key="1">
    <source>
        <dbReference type="UniProtKB" id="B2RXZ1"/>
    </source>
</evidence>
<evidence type="ECO:0000250" key="2">
    <source>
        <dbReference type="UniProtKB" id="O95453"/>
    </source>
</evidence>
<evidence type="ECO:0000255" key="3"/>
<evidence type="ECO:0000269" key="4">
    <source>
    </source>
</evidence>
<evidence type="ECO:0000269" key="5">
    <source>
    </source>
</evidence>
<evidence type="ECO:0000303" key="6">
    <source>
    </source>
</evidence>
<evidence type="ECO:0000303" key="7">
    <source>
    </source>
</evidence>
<evidence type="ECO:0000305" key="8"/>
<evidence type="ECO:0000305" key="9">
    <source>
    </source>
</evidence>
<evidence type="ECO:0000312" key="10">
    <source>
        <dbReference type="HGNC" id="HGNC:21185"/>
    </source>
</evidence>
<protein>
    <recommendedName>
        <fullName evidence="8">Poly(A)-specific ribonuclease PNLDC1</fullName>
        <ecNumber evidence="4">3.1.13.4</ecNumber>
    </recommendedName>
    <alternativeName>
        <fullName evidence="10">PARN-like domain-containing protein 1</fullName>
    </alternativeName>
    <alternativeName>
        <fullName evidence="10">Poly(A)-specific ribonuclease domain-containing protein 1</fullName>
        <shortName evidence="7">HsPNLDC1</shortName>
    </alternativeName>
</protein>
<organism>
    <name type="scientific">Homo sapiens</name>
    <name type="common">Human</name>
    <dbReference type="NCBI Taxonomy" id="9606"/>
    <lineage>
        <taxon>Eukaryota</taxon>
        <taxon>Metazoa</taxon>
        <taxon>Chordata</taxon>
        <taxon>Craniata</taxon>
        <taxon>Vertebrata</taxon>
        <taxon>Euteleostomi</taxon>
        <taxon>Mammalia</taxon>
        <taxon>Eutheria</taxon>
        <taxon>Euarchontoglires</taxon>
        <taxon>Primates</taxon>
        <taxon>Haplorrhini</taxon>
        <taxon>Catarrhini</taxon>
        <taxon>Hominidae</taxon>
        <taxon>Homo</taxon>
    </lineage>
</organism>
<name>PNDC1_HUMAN</name>
<comment type="function">
    <text evidence="1 4 5">3'-exoribonuclease that has a preference for poly(A) tails of mRNAs, thereby efficiently degrading poly(A) tails (PubMed:27515512). Exonucleolytic degradation of the poly(A) tail is often the first step in the decay of eukaryotic mRNAs and is also used to silence certain maternal mRNAs translationally during oocyte maturation and early embryonic development (PubMed:27515512). May act as a regulator of multipotency in embryonic stem cells (By similarity). Is a critical factor for proper spermatogenesis, involved in pre-piRNAs processing to generate mature piRNAs (PubMed:34347949).</text>
</comment>
<comment type="catalytic activity">
    <reaction evidence="4">
        <text>Exonucleolytic cleavage of poly(A) to 5'-AMP.</text>
        <dbReference type="EC" id="3.1.13.4"/>
    </reaction>
</comment>
<comment type="cofactor">
    <cofactor evidence="9">
        <name>Mg(2+)</name>
        <dbReference type="ChEBI" id="CHEBI:18420"/>
    </cofactor>
</comment>
<comment type="subcellular location">
    <subcellularLocation>
        <location evidence="4">Endoplasmic reticulum membrane</location>
        <topology evidence="8">Single-pass membrane protein</topology>
    </subcellularLocation>
    <text evidence="4">Localizes mainly in the endoplasmic reticulum (PubMed:27515512).</text>
</comment>
<comment type="alternative products">
    <event type="alternative splicing"/>
    <isoform>
        <id>Q8NA58-1</id>
        <name>1</name>
        <sequence type="displayed"/>
    </isoform>
    <isoform>
        <id>Q8NA58-2</id>
        <name>2</name>
        <sequence type="described" ref="VSP_029552"/>
    </isoform>
</comment>
<comment type="disease" evidence="5">
    <disease id="DI-06188">
        <name>Spermatogenic failure 57</name>
        <acronym>SPGF57</acronym>
        <description>An autosomal recessive male infertility disorder characterized by non-obstructive azoospermia, due to error-prone meiosis and spermatogenic arrest at the late pachytene stage.</description>
        <dbReference type="MIM" id="619528"/>
    </disease>
    <text>The disease is caused by variants affecting the gene represented in this entry.</text>
</comment>
<comment type="similarity">
    <text evidence="8">Belongs to the CAF1 family.</text>
</comment>
<gene>
    <name evidence="10" type="primary">PNLDC1</name>
</gene>
<sequence>MFCTRGLLFFAFLAGLDIEFTGLRSNLSGPQQISLFDLPSEWYLKTRQSVQQFTVCQIGLSVFSAIEGEANKYIAHSCNFYLFPTTFGILDSEFSFQASSVQFLNQYGFNYNKFLKNGIPYMNEEQEKKIRHDILTGNWRVRSSPDKDQIKVVIDEVTRWLELAKEGDWMTLPGITGFQAFEVQLVLRQALPNIWTVLKDEGVVVKKVSKQHRWYLQNTSCDRESCWKENILLSARGFSVFFQMLVKAQKPLVGHNMMMDLLHLHEKFFRPLPESYDQFKQNIHSLFPVLIDTKSVTKDIWKEMNFPRVSNLSEVYEVLNSDLNPTKNSGPEIVHASRCEKYVETKCPHEAAYDAFLCGSVLLKVAHLLLQKIYHIDPVPESSFPQYLDVLAPYVNQVNLIRAGVPKINFSGPDYPSIRPPILILSVKRWPGVSEQQVYHKFQNLCKFDVRRLTRSQFLLLTNKFKDARNILKEYRDHPTLCISLYRYWRHSPNVNCLLQVCGIVTAWALLAFILGRSGT</sequence>
<dbReference type="EC" id="3.1.13.4" evidence="4"/>
<dbReference type="EMBL" id="AK093139">
    <property type="protein sequence ID" value="BAC04070.1"/>
    <property type="molecule type" value="mRNA"/>
</dbReference>
<dbReference type="EMBL" id="AK097559">
    <property type="protein sequence ID" value="BAC05101.1"/>
    <property type="molecule type" value="mRNA"/>
</dbReference>
<dbReference type="EMBL" id="AL139045">
    <property type="status" value="NOT_ANNOTATED_CDS"/>
    <property type="molecule type" value="Genomic_DNA"/>
</dbReference>
<dbReference type="EMBL" id="CH471051">
    <property type="protein sequence ID" value="EAW47612.1"/>
    <property type="molecule type" value="Genomic_DNA"/>
</dbReference>
<dbReference type="EMBL" id="CH471051">
    <property type="protein sequence ID" value="EAW47613.1"/>
    <property type="molecule type" value="Genomic_DNA"/>
</dbReference>
<dbReference type="EMBL" id="BC112246">
    <property type="protein sequence ID" value="AAI12247.1"/>
    <property type="molecule type" value="mRNA"/>
</dbReference>
<dbReference type="CCDS" id="CCDS5271.2">
    <molecule id="Q8NA58-2"/>
</dbReference>
<dbReference type="CCDS" id="CCDS64561.1">
    <molecule id="Q8NA58-1"/>
</dbReference>
<dbReference type="RefSeq" id="NP_001258791.1">
    <molecule id="Q8NA58-2"/>
    <property type="nucleotide sequence ID" value="NM_001271862.2"/>
</dbReference>
<dbReference type="RefSeq" id="NP_775787.1">
    <molecule id="Q8NA58-1"/>
    <property type="nucleotide sequence ID" value="NM_173516.3"/>
</dbReference>
<dbReference type="RefSeq" id="XP_011533793.1">
    <molecule id="Q8NA58-1"/>
    <property type="nucleotide sequence ID" value="XM_011535491.3"/>
</dbReference>
<dbReference type="RefSeq" id="XP_054210333.1">
    <molecule id="Q8NA58-1"/>
    <property type="nucleotide sequence ID" value="XM_054354358.1"/>
</dbReference>
<dbReference type="SMR" id="Q8NA58"/>
<dbReference type="BioGRID" id="127539">
    <property type="interactions" value="17"/>
</dbReference>
<dbReference type="FunCoup" id="Q8NA58">
    <property type="interactions" value="127"/>
</dbReference>
<dbReference type="IntAct" id="Q8NA58">
    <property type="interactions" value="14"/>
</dbReference>
<dbReference type="STRING" id="9606.ENSP00000376007"/>
<dbReference type="GlyGen" id="Q8NA58">
    <property type="glycosylation" value="1 site, 1 O-linked glycan (1 site)"/>
</dbReference>
<dbReference type="iPTMnet" id="Q8NA58"/>
<dbReference type="PhosphoSitePlus" id="Q8NA58"/>
<dbReference type="BioMuta" id="PNLDC1"/>
<dbReference type="DMDM" id="160419239"/>
<dbReference type="MassIVE" id="Q8NA58"/>
<dbReference type="PaxDb" id="9606-ENSP00000376007"/>
<dbReference type="PeptideAtlas" id="Q8NA58"/>
<dbReference type="ProteomicsDB" id="72643">
    <molecule id="Q8NA58-1"/>
</dbReference>
<dbReference type="ProteomicsDB" id="72644">
    <molecule id="Q8NA58-2"/>
</dbReference>
<dbReference type="TopDownProteomics" id="Q8NA58-2">
    <molecule id="Q8NA58-2"/>
</dbReference>
<dbReference type="Antibodypedia" id="64136">
    <property type="antibodies" value="69 antibodies from 19 providers"/>
</dbReference>
<dbReference type="DNASU" id="154197"/>
<dbReference type="Ensembl" id="ENST00000392167.4">
    <molecule id="Q8NA58-2"/>
    <property type="protein sequence ID" value="ENSP00000376007.3"/>
    <property type="gene ID" value="ENSG00000146453.13"/>
</dbReference>
<dbReference type="Ensembl" id="ENST00000610273.5">
    <molecule id="Q8NA58-1"/>
    <property type="protein sequence ID" value="ENSP00000476448.1"/>
    <property type="gene ID" value="ENSG00000146453.13"/>
</dbReference>
<dbReference type="GeneID" id="154197"/>
<dbReference type="KEGG" id="hsa:154197"/>
<dbReference type="MANE-Select" id="ENST00000392167.4">
    <molecule id="Q8NA58-2"/>
    <property type="protein sequence ID" value="ENSP00000376007.3"/>
    <property type="RefSeq nucleotide sequence ID" value="NM_001271862.2"/>
    <property type="RefSeq protein sequence ID" value="NP_001258791.1"/>
</dbReference>
<dbReference type="UCSC" id="uc003qsx.3">
    <molecule id="Q8NA58-1"/>
    <property type="organism name" value="human"/>
</dbReference>
<dbReference type="AGR" id="HGNC:21185"/>
<dbReference type="CTD" id="154197"/>
<dbReference type="DisGeNET" id="154197"/>
<dbReference type="GeneCards" id="PNLDC1"/>
<dbReference type="HGNC" id="HGNC:21185">
    <property type="gene designation" value="PNLDC1"/>
</dbReference>
<dbReference type="HPA" id="ENSG00000146453">
    <property type="expression patterns" value="Tissue enhanced (brain, testis)"/>
</dbReference>
<dbReference type="MalaCards" id="PNLDC1"/>
<dbReference type="MIM" id="619528">
    <property type="type" value="phenotype"/>
</dbReference>
<dbReference type="MIM" id="619529">
    <property type="type" value="gene"/>
</dbReference>
<dbReference type="neXtProt" id="NX_Q8NA58"/>
<dbReference type="OpenTargets" id="ENSG00000146453"/>
<dbReference type="Orphanet" id="399805">
    <property type="disease" value="Male infertility with azoospermia or oligozoospermia due to single gene mutation"/>
</dbReference>
<dbReference type="PharmGKB" id="PA134892245"/>
<dbReference type="VEuPathDB" id="HostDB:ENSG00000146453"/>
<dbReference type="eggNOG" id="KOG1990">
    <property type="taxonomic scope" value="Eukaryota"/>
</dbReference>
<dbReference type="GeneTree" id="ENSGT00940000153167"/>
<dbReference type="HOGENOM" id="CLU_018030_3_0_1"/>
<dbReference type="InParanoid" id="Q8NA58"/>
<dbReference type="OMA" id="SCDRASC"/>
<dbReference type="OrthoDB" id="414075at2759"/>
<dbReference type="PAN-GO" id="Q8NA58">
    <property type="GO annotations" value="5 GO annotations based on evolutionary models"/>
</dbReference>
<dbReference type="PhylomeDB" id="Q8NA58"/>
<dbReference type="TreeFam" id="TF314502"/>
<dbReference type="BRENDA" id="3.1.13.4">
    <property type="organism ID" value="2681"/>
</dbReference>
<dbReference type="PathwayCommons" id="Q8NA58"/>
<dbReference type="SignaLink" id="Q8NA58"/>
<dbReference type="BioGRID-ORCS" id="154197">
    <property type="hits" value="7 hits in 1034 CRISPR screens"/>
</dbReference>
<dbReference type="ChiTaRS" id="PNLDC1">
    <property type="organism name" value="human"/>
</dbReference>
<dbReference type="GenomeRNAi" id="154197"/>
<dbReference type="Pharos" id="Q8NA58">
    <property type="development level" value="Tbio"/>
</dbReference>
<dbReference type="PRO" id="PR:Q8NA58"/>
<dbReference type="Proteomes" id="UP000005640">
    <property type="component" value="Chromosome 6"/>
</dbReference>
<dbReference type="RNAct" id="Q8NA58">
    <property type="molecule type" value="protein"/>
</dbReference>
<dbReference type="Bgee" id="ENSG00000146453">
    <property type="expression patterns" value="Expressed in oocyte and 98 other cell types or tissues"/>
</dbReference>
<dbReference type="ExpressionAtlas" id="Q8NA58">
    <property type="expression patterns" value="baseline and differential"/>
</dbReference>
<dbReference type="GO" id="GO:0005783">
    <property type="term" value="C:endoplasmic reticulum"/>
    <property type="evidence" value="ECO:0000314"/>
    <property type="project" value="UniProtKB"/>
</dbReference>
<dbReference type="GO" id="GO:0005789">
    <property type="term" value="C:endoplasmic reticulum membrane"/>
    <property type="evidence" value="ECO:0007669"/>
    <property type="project" value="UniProtKB-SubCell"/>
</dbReference>
<dbReference type="GO" id="GO:0005634">
    <property type="term" value="C:nucleus"/>
    <property type="evidence" value="ECO:0000318"/>
    <property type="project" value="GO_Central"/>
</dbReference>
<dbReference type="GO" id="GO:0000175">
    <property type="term" value="F:3'-5'-RNA exonuclease activity"/>
    <property type="evidence" value="ECO:0000318"/>
    <property type="project" value="GO_Central"/>
</dbReference>
<dbReference type="GO" id="GO:0046872">
    <property type="term" value="F:metal ion binding"/>
    <property type="evidence" value="ECO:0007669"/>
    <property type="project" value="UniProtKB-KW"/>
</dbReference>
<dbReference type="GO" id="GO:0004535">
    <property type="term" value="F:poly(A)-specific ribonuclease activity"/>
    <property type="evidence" value="ECO:0000314"/>
    <property type="project" value="UniProtKB"/>
</dbReference>
<dbReference type="GO" id="GO:0003723">
    <property type="term" value="F:RNA binding"/>
    <property type="evidence" value="ECO:0000318"/>
    <property type="project" value="GO_Central"/>
</dbReference>
<dbReference type="GO" id="GO:0001825">
    <property type="term" value="P:blastocyst formation"/>
    <property type="evidence" value="ECO:0007669"/>
    <property type="project" value="Ensembl"/>
</dbReference>
<dbReference type="GO" id="GO:0000184">
    <property type="term" value="P:nuclear-transcribed mRNA catabolic process, nonsense-mediated decay"/>
    <property type="evidence" value="ECO:0007669"/>
    <property type="project" value="UniProtKB-KW"/>
</dbReference>
<dbReference type="GO" id="GO:0000289">
    <property type="term" value="P:nuclear-transcribed mRNA poly(A) tail shortening"/>
    <property type="evidence" value="ECO:0000314"/>
    <property type="project" value="UniProtKB"/>
</dbReference>
<dbReference type="GO" id="GO:0034587">
    <property type="term" value="P:piRNA processing"/>
    <property type="evidence" value="ECO:0000315"/>
    <property type="project" value="UniProtKB"/>
</dbReference>
<dbReference type="GO" id="GO:1990431">
    <property type="term" value="P:priRNA 3'-end processing"/>
    <property type="evidence" value="ECO:0000318"/>
    <property type="project" value="GO_Central"/>
</dbReference>
<dbReference type="GO" id="GO:1990432">
    <property type="term" value="P:siRNA 3'-end processing"/>
    <property type="evidence" value="ECO:0000318"/>
    <property type="project" value="GO_Central"/>
</dbReference>
<dbReference type="GO" id="GO:0007283">
    <property type="term" value="P:spermatogenesis"/>
    <property type="evidence" value="ECO:0000315"/>
    <property type="project" value="UniProtKB"/>
</dbReference>
<dbReference type="FunFam" id="3.30.420.10:FF:000058">
    <property type="entry name" value="PARN like, ribonuclease domain containing 1"/>
    <property type="match status" value="1"/>
</dbReference>
<dbReference type="FunFam" id="3.30.420.10:FF:000061">
    <property type="entry name" value="PARN like, ribonuclease domain containing 1"/>
    <property type="match status" value="1"/>
</dbReference>
<dbReference type="Gene3D" id="3.30.420.10">
    <property type="entry name" value="Ribonuclease H-like superfamily/Ribonuclease H"/>
    <property type="match status" value="2"/>
</dbReference>
<dbReference type="InterPro" id="IPR051181">
    <property type="entry name" value="CAF1_poly(A)_ribonucleases"/>
</dbReference>
<dbReference type="InterPro" id="IPR006941">
    <property type="entry name" value="RNase_CAF1"/>
</dbReference>
<dbReference type="InterPro" id="IPR012337">
    <property type="entry name" value="RNaseH-like_sf"/>
</dbReference>
<dbReference type="InterPro" id="IPR036397">
    <property type="entry name" value="RNaseH_sf"/>
</dbReference>
<dbReference type="PANTHER" id="PTHR15092">
    <property type="entry name" value="POLY A -SPECIFIC RIBONUCLEASE/TARGET OF EGR1, MEMBER 1"/>
    <property type="match status" value="1"/>
</dbReference>
<dbReference type="PANTHER" id="PTHR15092:SF22">
    <property type="entry name" value="POLY(A)-SPECIFIC RIBONUCLEASE PNLDC1"/>
    <property type="match status" value="1"/>
</dbReference>
<dbReference type="Pfam" id="PF04857">
    <property type="entry name" value="CAF1"/>
    <property type="match status" value="1"/>
</dbReference>
<dbReference type="SUPFAM" id="SSF53098">
    <property type="entry name" value="Ribonuclease H-like"/>
    <property type="match status" value="1"/>
</dbReference>
<accession>Q8NA58</accession>
<accession>Q5TAP7</accession>
<accession>Q8N7X5</accession>
<proteinExistence type="evidence at protein level"/>